<reference key="1">
    <citation type="journal article" date="2005" name="Proc. Natl. Acad. Sci. U.S.A.">
        <title>The genome of the heartwater agent Ehrlichia ruminantium contains multiple tandem repeats of actively variable copy number.</title>
        <authorList>
            <person name="Collins N.E."/>
            <person name="Liebenberg J."/>
            <person name="de Villiers E.P."/>
            <person name="Brayton K.A."/>
            <person name="Louw E."/>
            <person name="Pretorius A."/>
            <person name="Faber F.E."/>
            <person name="van Heerden H."/>
            <person name="Josemans A."/>
            <person name="van Kleef M."/>
            <person name="Steyn H.C."/>
            <person name="van Strijp M.F."/>
            <person name="Zweygarth E."/>
            <person name="Jongejan F."/>
            <person name="Maillard J.C."/>
            <person name="Berthier D."/>
            <person name="Botha M."/>
            <person name="Joubert F."/>
            <person name="Corton C.H."/>
            <person name="Thomson N.R."/>
            <person name="Allsopp M.T."/>
            <person name="Allsopp B.A."/>
        </authorList>
    </citation>
    <scope>NUCLEOTIDE SEQUENCE [LARGE SCALE GENOMIC DNA]</scope>
    <source>
        <strain>Welgevonden</strain>
    </source>
</reference>
<reference key="2">
    <citation type="journal article" date="2006" name="J. Bacteriol.">
        <title>Comparative genomic analysis of three strains of Ehrlichia ruminantium reveals an active process of genome size plasticity.</title>
        <authorList>
            <person name="Frutos R."/>
            <person name="Viari A."/>
            <person name="Ferraz C."/>
            <person name="Morgat A."/>
            <person name="Eychenie S."/>
            <person name="Kandassamy Y."/>
            <person name="Chantal I."/>
            <person name="Bensaid A."/>
            <person name="Coissac E."/>
            <person name="Vachiery N."/>
            <person name="Demaille J."/>
            <person name="Martinez D."/>
        </authorList>
    </citation>
    <scope>NUCLEOTIDE SEQUENCE [LARGE SCALE GENOMIC DNA]</scope>
    <source>
        <strain>Welgevonden</strain>
    </source>
</reference>
<evidence type="ECO:0000255" key="1">
    <source>
        <dbReference type="HAMAP-Rule" id="MF_01708"/>
    </source>
</evidence>
<evidence type="ECO:0000305" key="2"/>
<keyword id="KW-0067">ATP-binding</keyword>
<keyword id="KW-0997">Cell inner membrane</keyword>
<keyword id="KW-1003">Cell membrane</keyword>
<keyword id="KW-0472">Membrane</keyword>
<keyword id="KW-0547">Nucleotide-binding</keyword>
<keyword id="KW-1278">Translocase</keyword>
<keyword id="KW-0813">Transport</keyword>
<protein>
    <recommendedName>
        <fullName evidence="1">Lipoprotein-releasing system ATP-binding protein LolD</fullName>
        <ecNumber evidence="1">7.6.2.-</ecNumber>
    </recommendedName>
</protein>
<sequence length="228" mass="25099">MSIVFALSAISKSFGKNNQVNIIINANLQIKKGEIVALIGPSGSGKSTLLHIAGLLDTPSSGSVFINNIECSATTSDREKTYLRRNFLGFVYQFHHLLQEFSVLENVMLPQIIIGKSNEVARKNAIELLSLVKLQDKLLMSISQLSGGERQRVAIARSLINYPSIILADEPTGSLDNDTALEVFSLLHKYAKEKNISVFLATHNHILAKKADKIVQINSGTLQNYTDY</sequence>
<organism>
    <name type="scientific">Ehrlichia ruminantium (strain Welgevonden)</name>
    <dbReference type="NCBI Taxonomy" id="254945"/>
    <lineage>
        <taxon>Bacteria</taxon>
        <taxon>Pseudomonadati</taxon>
        <taxon>Pseudomonadota</taxon>
        <taxon>Alphaproteobacteria</taxon>
        <taxon>Rickettsiales</taxon>
        <taxon>Anaplasmataceae</taxon>
        <taxon>Ehrlichia</taxon>
    </lineage>
</organism>
<feature type="chain" id="PRO_0000272081" description="Lipoprotein-releasing system ATP-binding protein LolD">
    <location>
        <begin position="1"/>
        <end position="228"/>
    </location>
</feature>
<feature type="domain" description="ABC transporter" evidence="1">
    <location>
        <begin position="5"/>
        <end position="228"/>
    </location>
</feature>
<feature type="binding site" evidence="1">
    <location>
        <begin position="40"/>
        <end position="47"/>
    </location>
    <ligand>
        <name>ATP</name>
        <dbReference type="ChEBI" id="CHEBI:30616"/>
    </ligand>
</feature>
<name>LOLD_EHRRW</name>
<gene>
    <name evidence="1" type="primary">lolD</name>
    <name type="ordered locus">Erum1190</name>
    <name type="ordered locus">ERWE_CDS_01160</name>
</gene>
<proteinExistence type="inferred from homology"/>
<dbReference type="EC" id="7.6.2.-" evidence="1"/>
<dbReference type="EMBL" id="CR767821">
    <property type="protein sequence ID" value="CAH57834.1"/>
    <property type="molecule type" value="Genomic_DNA"/>
</dbReference>
<dbReference type="EMBL" id="CR925678">
    <property type="protein sequence ID" value="CAI26610.1"/>
    <property type="status" value="ALT_INIT"/>
    <property type="molecule type" value="Genomic_DNA"/>
</dbReference>
<dbReference type="RefSeq" id="WP_011154803.1">
    <property type="nucleotide sequence ID" value="NC_005295.2"/>
</dbReference>
<dbReference type="SMR" id="Q5HC57"/>
<dbReference type="GeneID" id="33058190"/>
<dbReference type="KEGG" id="eru:Erum1190"/>
<dbReference type="KEGG" id="erw:ERWE_CDS_01160"/>
<dbReference type="eggNOG" id="COG1136">
    <property type="taxonomic scope" value="Bacteria"/>
</dbReference>
<dbReference type="HOGENOM" id="CLU_000604_1_22_5"/>
<dbReference type="Proteomes" id="UP000001021">
    <property type="component" value="Chromosome"/>
</dbReference>
<dbReference type="GO" id="GO:0005886">
    <property type="term" value="C:plasma membrane"/>
    <property type="evidence" value="ECO:0007669"/>
    <property type="project" value="UniProtKB-SubCell"/>
</dbReference>
<dbReference type="GO" id="GO:0005524">
    <property type="term" value="F:ATP binding"/>
    <property type="evidence" value="ECO:0007669"/>
    <property type="project" value="UniProtKB-KW"/>
</dbReference>
<dbReference type="GO" id="GO:0016887">
    <property type="term" value="F:ATP hydrolysis activity"/>
    <property type="evidence" value="ECO:0007669"/>
    <property type="project" value="InterPro"/>
</dbReference>
<dbReference type="CDD" id="cd03255">
    <property type="entry name" value="ABC_MJ0796_LolCDE_FtsE"/>
    <property type="match status" value="1"/>
</dbReference>
<dbReference type="Gene3D" id="3.40.50.300">
    <property type="entry name" value="P-loop containing nucleotide triphosphate hydrolases"/>
    <property type="match status" value="1"/>
</dbReference>
<dbReference type="InterPro" id="IPR003593">
    <property type="entry name" value="AAA+_ATPase"/>
</dbReference>
<dbReference type="InterPro" id="IPR003439">
    <property type="entry name" value="ABC_transporter-like_ATP-bd"/>
</dbReference>
<dbReference type="InterPro" id="IPR017871">
    <property type="entry name" value="ABC_transporter-like_CS"/>
</dbReference>
<dbReference type="InterPro" id="IPR017911">
    <property type="entry name" value="MacB-like_ATP-bd"/>
</dbReference>
<dbReference type="InterPro" id="IPR027417">
    <property type="entry name" value="P-loop_NTPase"/>
</dbReference>
<dbReference type="PANTHER" id="PTHR42798:SF7">
    <property type="entry name" value="ALPHA-D-RIBOSE 1-METHYLPHOSPHONATE 5-TRIPHOSPHATE SYNTHASE SUBUNIT PHNL"/>
    <property type="match status" value="1"/>
</dbReference>
<dbReference type="PANTHER" id="PTHR42798">
    <property type="entry name" value="LIPOPROTEIN-RELEASING SYSTEM ATP-BINDING PROTEIN LOLD"/>
    <property type="match status" value="1"/>
</dbReference>
<dbReference type="Pfam" id="PF00005">
    <property type="entry name" value="ABC_tran"/>
    <property type="match status" value="1"/>
</dbReference>
<dbReference type="SMART" id="SM00382">
    <property type="entry name" value="AAA"/>
    <property type="match status" value="1"/>
</dbReference>
<dbReference type="SUPFAM" id="SSF52540">
    <property type="entry name" value="P-loop containing nucleoside triphosphate hydrolases"/>
    <property type="match status" value="1"/>
</dbReference>
<dbReference type="PROSITE" id="PS00211">
    <property type="entry name" value="ABC_TRANSPORTER_1"/>
    <property type="match status" value="1"/>
</dbReference>
<dbReference type="PROSITE" id="PS50893">
    <property type="entry name" value="ABC_TRANSPORTER_2"/>
    <property type="match status" value="1"/>
</dbReference>
<dbReference type="PROSITE" id="PS51244">
    <property type="entry name" value="LOLD"/>
    <property type="match status" value="1"/>
</dbReference>
<comment type="function">
    <text evidence="1">Part of the ABC transporter complex LolCDE involved in the translocation of mature outer membrane-directed lipoproteins, from the inner membrane to the periplasmic chaperone, LolA. Responsible for the formation of the LolA-lipoprotein complex in an ATP-dependent manner.</text>
</comment>
<comment type="subunit">
    <text evidence="1">The complex is composed of two ATP-binding proteins (LolD) and two transmembrane proteins (LolC and LolE).</text>
</comment>
<comment type="subcellular location">
    <subcellularLocation>
        <location evidence="1">Cell inner membrane</location>
        <topology evidence="1">Peripheral membrane protein</topology>
    </subcellularLocation>
</comment>
<comment type="similarity">
    <text evidence="1">Belongs to the ABC transporter superfamily. Lipoprotein translocase (TC 3.A.1.125) family.</text>
</comment>
<comment type="sequence caution" evidence="2">
    <conflict type="erroneous initiation">
        <sequence resource="EMBL-CDS" id="CAI26610"/>
    </conflict>
</comment>
<accession>Q5HC57</accession>
<accession>Q5FCS4</accession>